<feature type="chain" id="PRO_0000441378" description="[methyl-Co(III) glycine betaine-specific corrinoid protein]--tetrahydrofolate methyltransferase">
    <location>
        <begin position="1"/>
        <end position="306"/>
    </location>
</feature>
<feature type="strand" evidence="5">
    <location>
        <begin position="10"/>
        <end position="13"/>
    </location>
</feature>
<feature type="strand" evidence="5">
    <location>
        <begin position="16"/>
        <end position="19"/>
    </location>
</feature>
<feature type="turn" evidence="5">
    <location>
        <begin position="22"/>
        <end position="24"/>
    </location>
</feature>
<feature type="strand" evidence="5">
    <location>
        <begin position="28"/>
        <end position="34"/>
    </location>
</feature>
<feature type="strand" evidence="5">
    <location>
        <begin position="41"/>
        <end position="43"/>
    </location>
</feature>
<feature type="turn" evidence="5">
    <location>
        <begin position="44"/>
        <end position="47"/>
    </location>
</feature>
<feature type="helix" evidence="5">
    <location>
        <begin position="51"/>
        <end position="68"/>
    </location>
</feature>
<feature type="strand" evidence="5">
    <location>
        <begin position="72"/>
        <end position="77"/>
    </location>
</feature>
<feature type="helix" evidence="5">
    <location>
        <begin position="81"/>
        <end position="94"/>
    </location>
</feature>
<feature type="strand" evidence="5">
    <location>
        <begin position="99"/>
        <end position="102"/>
    </location>
</feature>
<feature type="helix" evidence="5">
    <location>
        <begin position="106"/>
        <end position="116"/>
    </location>
</feature>
<feature type="helix" evidence="5">
    <location>
        <begin position="120"/>
        <end position="125"/>
    </location>
</feature>
<feature type="strand" evidence="5">
    <location>
        <begin position="126"/>
        <end position="131"/>
    </location>
</feature>
<feature type="helix" evidence="5">
    <location>
        <begin position="137"/>
        <end position="146"/>
    </location>
</feature>
<feature type="strand" evidence="5">
    <location>
        <begin position="150"/>
        <end position="154"/>
    </location>
</feature>
<feature type="helix" evidence="5">
    <location>
        <begin position="163"/>
        <end position="168"/>
    </location>
</feature>
<feature type="helix" evidence="5">
    <location>
        <begin position="179"/>
        <end position="185"/>
    </location>
</feature>
<feature type="strand" evidence="5">
    <location>
        <begin position="190"/>
        <end position="194"/>
    </location>
</feature>
<feature type="helix" evidence="5">
    <location>
        <begin position="203"/>
        <end position="216"/>
    </location>
</feature>
<feature type="strand" evidence="5">
    <location>
        <begin position="221"/>
        <end position="223"/>
    </location>
</feature>
<feature type="helix" evidence="5">
    <location>
        <begin position="226"/>
        <end position="229"/>
    </location>
</feature>
<feature type="helix" evidence="5">
    <location>
        <begin position="233"/>
        <end position="236"/>
    </location>
</feature>
<feature type="helix" evidence="5">
    <location>
        <begin position="242"/>
        <end position="256"/>
    </location>
</feature>
<feature type="strand" evidence="5">
    <location>
        <begin position="261"/>
        <end position="266"/>
    </location>
</feature>
<feature type="helix" evidence="5">
    <location>
        <begin position="267"/>
        <end position="269"/>
    </location>
</feature>
<feature type="helix" evidence="5">
    <location>
        <begin position="270"/>
        <end position="286"/>
    </location>
</feature>
<feature type="helix" evidence="5">
    <location>
        <begin position="288"/>
        <end position="291"/>
    </location>
</feature>
<feature type="helix" evidence="5">
    <location>
        <begin position="301"/>
        <end position="303"/>
    </location>
</feature>
<organism>
    <name type="scientific">Desulfitobacterium hafniense (strain Y51)</name>
    <dbReference type="NCBI Taxonomy" id="138119"/>
    <lineage>
        <taxon>Bacteria</taxon>
        <taxon>Bacillati</taxon>
        <taxon>Bacillota</taxon>
        <taxon>Clostridia</taxon>
        <taxon>Eubacteriales</taxon>
        <taxon>Desulfitobacteriaceae</taxon>
        <taxon>Desulfitobacterium</taxon>
    </lineage>
</organism>
<sequence length="306" mass="33459">MFKFTAQQHVYDINGVKVGGQPGEYPTVLIGSIFYRGHKIVSDGQKGIFDKDAAKALLDQEAELSAETGNPFIIDVLGESVEALTKYVEFILENTTAPFLLDSISPDVRVGALKNLGKDPEIQKRLIYNSIEEHYTEEELAAIKEAGLKTAVILAFSKKALKPNARIDLLQGKDDKEGLIAAAKRAGIEQFLVDPGVLDVASNSWTTEAINVVKEQFGYPGGCAPSNAVYLWKKMRSKGTPFFEVAGAAVFTYPITQGADFILYGPMMNAPWVYRAIATTDAMIAYNNKLTGVKMGTTEHPLLKIF</sequence>
<evidence type="ECO:0000269" key="1">
    <source>
    </source>
</evidence>
<evidence type="ECO:0000303" key="2">
    <source>
    </source>
</evidence>
<evidence type="ECO:0000305" key="3"/>
<evidence type="ECO:0000312" key="4">
    <source>
        <dbReference type="EMBL" id="BAE84946.1"/>
    </source>
</evidence>
<evidence type="ECO:0007829" key="5">
    <source>
        <dbReference type="PDB" id="6SK4"/>
    </source>
</evidence>
<reference key="1">
    <citation type="journal article" date="2006" name="J. Bacteriol.">
        <title>Complete genome sequence of the dehalorespiring bacterium Desulfitobacterium hafniense Y51 and comparison with Dehalococcoides ethenogenes 195.</title>
        <authorList>
            <person name="Nonaka H."/>
            <person name="Keresztes G."/>
            <person name="Shinoda Y."/>
            <person name="Ikenaga Y."/>
            <person name="Abe M."/>
            <person name="Naito K."/>
            <person name="Inatomi K."/>
            <person name="Furukawa K."/>
            <person name="Inui M."/>
            <person name="Yukawa H."/>
        </authorList>
    </citation>
    <scope>NUCLEOTIDE SEQUENCE [LARGE SCALE GENOMIC DNA]</scope>
    <source>
        <strain>Y51</strain>
    </source>
</reference>
<reference key="2">
    <citation type="journal article" date="2014" name="Proc. Natl. Acad. Sci. U.S.A.">
        <title>A nonpyrrolysine member of the widely distributed trimethylamine methyltransferase family is a glycine betaine methyltransferase.</title>
        <authorList>
            <person name="Ticak T."/>
            <person name="Kountz D.J."/>
            <person name="Girosky K.E."/>
            <person name="Krzycki J.A."/>
            <person name="Ferguson D.J. Jr."/>
        </authorList>
    </citation>
    <scope>FUNCTION</scope>
    <scope>CATALYTIC ACTIVITY</scope>
    <source>
        <strain>Y51</strain>
    </source>
</reference>
<proteinExistence type="evidence at protein level"/>
<comment type="function">
    <text evidence="1">Methyltransferase able to catalyze the transfer of a methyl group from methylcobalamin (methylCbl) to tetrahydrofolate (THF) in vitro, to generate methyl-THF and cob(I)alamin. In vivo, the methyl group probably comes from the adjacently encoded methylated corrinoid protein DSY3155. The methyl group may then be ultimately converted to carbon dioxide, and its oxidation would also provide reducing equivalents for anaerobic respiration. Thus, may function in the pathway that allows anaerobic methylotrophic growth of D.hafniense using glycine betaine.</text>
</comment>
<comment type="catalytic activity">
    <reaction evidence="1">
        <text>methyl-Co(III)-[glycine betaine-specific corrinoid protein] + (6S)-5,6,7,8-tetrahydrofolate = Co(I)-[glycine betaine-specific corrinoid protein] + (6S)-5-methyl-5,6,7,8-tetrahydrofolate + H(+)</text>
        <dbReference type="Rhea" id="RHEA:66000"/>
        <dbReference type="Rhea" id="RHEA-COMP:16947"/>
        <dbReference type="Rhea" id="RHEA-COMP:16948"/>
        <dbReference type="ChEBI" id="CHEBI:15378"/>
        <dbReference type="ChEBI" id="CHEBI:18608"/>
        <dbReference type="ChEBI" id="CHEBI:57453"/>
        <dbReference type="ChEBI" id="CHEBI:85033"/>
        <dbReference type="ChEBI" id="CHEBI:85035"/>
        <dbReference type="EC" id="2.1.1.378"/>
    </reaction>
</comment>
<comment type="similarity">
    <text evidence="3">Belongs to the MtrH family.</text>
</comment>
<keyword id="KW-0002">3D-structure</keyword>
<keyword id="KW-0489">Methyltransferase</keyword>
<keyword id="KW-0554">One-carbon metabolism</keyword>
<keyword id="KW-1185">Reference proteome</keyword>
<keyword id="KW-0808">Transferase</keyword>
<name>MTGA_DESHY</name>
<dbReference type="EC" id="2.1.1.378" evidence="1"/>
<dbReference type="EMBL" id="AP008230">
    <property type="protein sequence ID" value="BAE84946.1"/>
    <property type="molecule type" value="Genomic_DNA"/>
</dbReference>
<dbReference type="RefSeq" id="WP_005816523.1">
    <property type="nucleotide sequence ID" value="NC_007907.1"/>
</dbReference>
<dbReference type="PDB" id="6SK4">
    <property type="method" value="X-ray"/>
    <property type="resolution" value="1.55 A"/>
    <property type="chains" value="A/B/C/D=2-306"/>
</dbReference>
<dbReference type="PDBsum" id="6SK4"/>
<dbReference type="SMR" id="Q24SP6"/>
<dbReference type="STRING" id="138119.DSY3157"/>
<dbReference type="KEGG" id="dsy:DSY3157"/>
<dbReference type="eggNOG" id="COG1962">
    <property type="taxonomic scope" value="Bacteria"/>
</dbReference>
<dbReference type="HOGENOM" id="CLU_048697_0_0_9"/>
<dbReference type="BRENDA" id="2.1.1.378">
    <property type="organism ID" value="1880"/>
</dbReference>
<dbReference type="Proteomes" id="UP000001946">
    <property type="component" value="Chromosome"/>
</dbReference>
<dbReference type="GO" id="GO:0008168">
    <property type="term" value="F:methyltransferase activity"/>
    <property type="evidence" value="ECO:0007669"/>
    <property type="project" value="UniProtKB-KW"/>
</dbReference>
<dbReference type="GO" id="GO:0032259">
    <property type="term" value="P:methylation"/>
    <property type="evidence" value="ECO:0007669"/>
    <property type="project" value="UniProtKB-KW"/>
</dbReference>
<dbReference type="GO" id="GO:0006730">
    <property type="term" value="P:one-carbon metabolic process"/>
    <property type="evidence" value="ECO:0007669"/>
    <property type="project" value="UniProtKB-KW"/>
</dbReference>
<dbReference type="Gene3D" id="3.20.20.20">
    <property type="entry name" value="Dihydropteroate synthase-like"/>
    <property type="match status" value="1"/>
</dbReference>
<dbReference type="InterPro" id="IPR011005">
    <property type="entry name" value="Dihydropteroate_synth-like_sf"/>
</dbReference>
<dbReference type="InterPro" id="IPR023467">
    <property type="entry name" value="MeTrfase_MtrH/MtxH"/>
</dbReference>
<dbReference type="NCBIfam" id="NF002142">
    <property type="entry name" value="PRK00979.1-1"/>
    <property type="match status" value="1"/>
</dbReference>
<dbReference type="NCBIfam" id="NF002145">
    <property type="entry name" value="PRK00979.1-4"/>
    <property type="match status" value="1"/>
</dbReference>
<dbReference type="Pfam" id="PF02007">
    <property type="entry name" value="MtrH"/>
    <property type="match status" value="1"/>
</dbReference>
<dbReference type="PIRSF" id="PIRSF004960">
    <property type="entry name" value="MtrH_MtxH"/>
    <property type="match status" value="1"/>
</dbReference>
<dbReference type="SUPFAM" id="SSF51717">
    <property type="entry name" value="Dihydropteroate synthetase-like"/>
    <property type="match status" value="1"/>
</dbReference>
<accession>Q24SP6</accession>
<gene>
    <name evidence="2" type="primary">mtgA</name>
    <name evidence="4" type="ordered locus">DSY3157</name>
</gene>
<protein>
    <recommendedName>
        <fullName evidence="3">[methyl-Co(III) glycine betaine-specific corrinoid protein]--tetrahydrofolate methyltransferase</fullName>
        <ecNumber evidence="1">2.1.1.378</ecNumber>
    </recommendedName>
    <alternativeName>
        <fullName evidence="2">Methylcobalamin:tetrahydrofolate methyltransferase</fullName>
        <shortName evidence="2">MethylCbl:THF methyltransferase</shortName>
    </alternativeName>
    <alternativeName>
        <fullName evidence="2">Methylcorrinoid:tetrahydrofolate methyltransferase</fullName>
    </alternativeName>
</protein>